<evidence type="ECO:0000250" key="1">
    <source>
        <dbReference type="UniProtKB" id="Q9CZX5"/>
    </source>
</evidence>
<evidence type="ECO:0000255" key="2">
    <source>
        <dbReference type="PROSITE-ProRule" id="PRU00092"/>
    </source>
</evidence>
<evidence type="ECO:0000256" key="3">
    <source>
        <dbReference type="SAM" id="MobiDB-lite"/>
    </source>
</evidence>
<evidence type="ECO:0000269" key="4">
    <source>
    </source>
</evidence>
<evidence type="ECO:0000269" key="5">
    <source>
    </source>
</evidence>
<evidence type="ECO:0000269" key="6">
    <source>
    </source>
</evidence>
<evidence type="ECO:0000269" key="7">
    <source>
    </source>
</evidence>
<evidence type="ECO:0000269" key="8">
    <source>
    </source>
</evidence>
<evidence type="ECO:0000269" key="9">
    <source>
    </source>
</evidence>
<evidence type="ECO:0000269" key="10">
    <source>
    </source>
</evidence>
<evidence type="ECO:0000269" key="11">
    <source>
    </source>
</evidence>
<evidence type="ECO:0000269" key="12">
    <source>
    </source>
</evidence>
<evidence type="ECO:0000269" key="13">
    <source>
    </source>
</evidence>
<evidence type="ECO:0000269" key="14">
    <source>
    </source>
</evidence>
<evidence type="ECO:0000303" key="15">
    <source>
    </source>
</evidence>
<evidence type="ECO:0000303" key="16">
    <source ref="5"/>
</evidence>
<evidence type="ECO:0000305" key="17"/>
<protein>
    <recommendedName>
        <fullName>PIN2/TERF1-interacting telomerase inhibitor 1</fullName>
    </recommendedName>
    <alternativeName>
        <fullName>Liver-related putative tumor suppressor</fullName>
    </alternativeName>
    <alternativeName>
        <fullName>Pin2-interacting protein X1</fullName>
    </alternativeName>
    <alternativeName>
        <fullName>Protein 67-11-3</fullName>
    </alternativeName>
    <alternativeName>
        <fullName>TRF1-interacting protein 1</fullName>
    </alternativeName>
</protein>
<organism>
    <name type="scientific">Homo sapiens</name>
    <name type="common">Human</name>
    <dbReference type="NCBI Taxonomy" id="9606"/>
    <lineage>
        <taxon>Eukaryota</taxon>
        <taxon>Metazoa</taxon>
        <taxon>Chordata</taxon>
        <taxon>Craniata</taxon>
        <taxon>Vertebrata</taxon>
        <taxon>Euteleostomi</taxon>
        <taxon>Mammalia</taxon>
        <taxon>Eutheria</taxon>
        <taxon>Euarchontoglires</taxon>
        <taxon>Primates</taxon>
        <taxon>Haplorrhini</taxon>
        <taxon>Catarrhini</taxon>
        <taxon>Hominidae</taxon>
        <taxon>Homo</taxon>
    </lineage>
</organism>
<accession>Q96BK5</accession>
<accession>B2R9B1</accession>
<accession>Q548A5</accession>
<accession>Q6QWG9</accession>
<accession>Q7Z7J8</accession>
<accession>Q96QD7</accession>
<accession>Q9HBU7</accession>
<accession>Q9NWW2</accession>
<feature type="chain" id="PRO_0000058443" description="PIN2/TERF1-interacting telomerase inhibitor 1">
    <location>
        <begin position="1"/>
        <end position="328"/>
    </location>
</feature>
<feature type="domain" description="G-patch" evidence="2">
    <location>
        <begin position="26"/>
        <end position="72"/>
    </location>
</feature>
<feature type="region of interest" description="Disordered" evidence="3">
    <location>
        <begin position="1"/>
        <end position="28"/>
    </location>
</feature>
<feature type="region of interest" description="Disordered" evidence="3">
    <location>
        <begin position="147"/>
        <end position="177"/>
    </location>
</feature>
<feature type="region of interest" description="Disordered" evidence="3">
    <location>
        <begin position="189"/>
        <end position="307"/>
    </location>
</feature>
<feature type="region of interest" description="Telomerase inhibitory domain (TID)">
    <location>
        <begin position="254"/>
        <end position="328"/>
    </location>
</feature>
<feature type="short sequence motif" description="TBM">
    <location>
        <begin position="287"/>
        <end position="297"/>
    </location>
</feature>
<feature type="compositionally biased region" description="Low complexity" evidence="3">
    <location>
        <begin position="161"/>
        <end position="174"/>
    </location>
</feature>
<feature type="compositionally biased region" description="Basic and acidic residues" evidence="3">
    <location>
        <begin position="235"/>
        <end position="261"/>
    </location>
</feature>
<feature type="compositionally biased region" description="Basic residues" evidence="3">
    <location>
        <begin position="292"/>
        <end position="303"/>
    </location>
</feature>
<feature type="site" description="(Microbial infection) Cleavage by enterovirus 71 protease 3C" evidence="14">
    <location>
        <begin position="50"/>
        <end position="51"/>
    </location>
</feature>
<feature type="modified residue" description="Phosphoserine" evidence="1">
    <location>
        <position position="270"/>
    </location>
</feature>
<feature type="modified residue" description="Phosphoserine" evidence="1">
    <location>
        <position position="273"/>
    </location>
</feature>
<feature type="splice variant" id="VSP_003945" description="In isoform 2." evidence="15 16">
    <original>KDLSSRSKTDLDCIFGKRQSKKTPEGDASPSTPEENETTTTS</original>
    <variation>RCQSLHSRGERNHDNQRLHHPGVLCQADGSTEEQAPGSSSRV</variation>
    <location>
        <begin position="133"/>
        <end position="174"/>
    </location>
</feature>
<feature type="splice variant" id="VSP_003946" description="In isoform 2." evidence="15 16">
    <location>
        <begin position="175"/>
        <end position="328"/>
    </location>
</feature>
<feature type="sequence variant" id="VAR_054024" description="In dbSNP:rs35530857.">
    <original>Q</original>
    <variation>H</variation>
    <location>
        <position position="206"/>
    </location>
</feature>
<feature type="sequence variant" id="VAR_054025" description="In dbSNP:rs17855458." evidence="5">
    <original>R</original>
    <variation>I</variation>
    <location>
        <position position="215"/>
    </location>
</feature>
<feature type="sequence variant" id="VAR_054026" description="In dbSNP:rs17711777.">
    <original>T</original>
    <variation>A</variation>
    <location>
        <position position="220"/>
    </location>
</feature>
<feature type="sequence variant" id="VAR_054027" description="In dbSNP:rs1078543." evidence="4">
    <original>S</original>
    <variation>C</variation>
    <location>
        <position position="254"/>
    </location>
</feature>
<feature type="sequence variant" id="VAR_054028" description="In dbSNP:rs34656824.">
    <original>E</original>
    <variation>A</variation>
    <location>
        <position position="315"/>
    </location>
</feature>
<feature type="mutagenesis site" description="Abolishes cleavage by enterovirus 71." evidence="14">
    <original>Q</original>
    <variation>A</variation>
    <location>
        <position position="50"/>
    </location>
</feature>
<feature type="mutagenesis site" description="Abolishes interaction with TERF1." evidence="9">
    <original>L</original>
    <variation>A</variation>
    <location>
        <position position="291"/>
    </location>
</feature>
<feature type="mutagenesis site" description="Does not affect interaction with TERF1." evidence="9">
    <original>P</original>
    <variation>A</variation>
    <location>
        <position position="293"/>
    </location>
</feature>
<feature type="sequence conflict" description="In Ref. 9; AAH15479." evidence="17" ref="9">
    <original>Q</original>
    <variation>H</variation>
    <location>
        <position position="50"/>
    </location>
</feature>
<feature type="sequence conflict" description="In Ref. 2; AAK31790." evidence="17" ref="2">
    <original>RM</original>
    <variation>PV</variation>
    <location>
        <begin position="185"/>
        <end position="186"/>
    </location>
</feature>
<feature type="sequence conflict" description="In Ref. 3; CAC51436." evidence="17" ref="3">
    <original>E</original>
    <variation>V</variation>
    <location>
        <position position="204"/>
    </location>
</feature>
<feature type="sequence conflict" description="In Ref. 6; AAS19507." evidence="17" ref="6">
    <original>T</original>
    <variation>A</variation>
    <location>
        <position position="205"/>
    </location>
</feature>
<feature type="sequence conflict" description="In Ref. 2; AAK31790." evidence="17" ref="2">
    <original>E</original>
    <variation>K</variation>
    <location>
        <position position="259"/>
    </location>
</feature>
<comment type="function">
    <text evidence="7 8 10 11 12 13">Microtubule-binding protein essential for faithful chromosome segregation. Mediates TRF1 and TERT accumulation in nucleolus and enhances TRF1 binding to telomeres. Inhibits telomerase activity. May inhibit cell proliferation and act as tumor suppressor.</text>
</comment>
<comment type="subunit">
    <text evidence="6 7 9 12">Interacts with MCRS1, TERT, TERF1, NCL/nucleolin, and the telomerase RNA.</text>
</comment>
<comment type="interaction">
    <interactant intactId="EBI-721782">
        <id>Q96BK5</id>
    </interactant>
    <interactant intactId="EBI-4401674">
        <id>Q96BJ3</id>
        <label>AIDA</label>
    </interactant>
    <organismsDiffer>false</organismsDiffer>
    <experiments>4</experiments>
</comment>
<comment type="interaction">
    <interactant intactId="EBI-721782">
        <id>Q96BK5</id>
    </interactant>
    <interactant intactId="EBI-725606">
        <id>Q9NWQ9</id>
        <label>C14orf119</label>
    </interactant>
    <organismsDiffer>false</organismsDiffer>
    <experiments>3</experiments>
</comment>
<comment type="interaction">
    <interactant intactId="EBI-721782">
        <id>Q96BK5</id>
    </interactant>
    <interactant intactId="EBI-750700">
        <id>Q8N9N8</id>
        <label>EIF1AD</label>
    </interactant>
    <organismsDiffer>false</organismsDiffer>
    <experiments>3</experiments>
</comment>
<comment type="interaction">
    <interactant intactId="EBI-721782">
        <id>Q96BK5</id>
    </interactant>
    <interactant intactId="EBI-740553">
        <id>P13807</id>
        <label>GYS1</label>
    </interactant>
    <organismsDiffer>false</organismsDiffer>
    <experiments>3</experiments>
</comment>
<comment type="interaction">
    <interactant intactId="EBI-721782">
        <id>Q96BK5</id>
    </interactant>
    <interactant intactId="EBI-1048159">
        <id>P55081</id>
        <label>MFAP1</label>
    </interactant>
    <organismsDiffer>false</organismsDiffer>
    <experiments>3</experiments>
</comment>
<comment type="interaction">
    <interactant intactId="EBI-721782">
        <id>Q96BK5</id>
    </interactant>
    <interactant intactId="EBI-78579">
        <id>P06748</id>
        <label>NPM1</label>
    </interactant>
    <organismsDiffer>false</organismsDiffer>
    <experiments>12</experiments>
</comment>
<comment type="interaction">
    <interactant intactId="EBI-721782">
        <id>Q96BK5</id>
    </interactant>
    <interactant intactId="EBI-710997">
        <id>P54274</id>
        <label>TERF1</label>
    </interactant>
    <organismsDiffer>false</organismsDiffer>
    <experiments>4</experiments>
</comment>
<comment type="interaction">
    <interactant intactId="EBI-721782">
        <id>Q96BK5</id>
    </interactant>
    <interactant intactId="EBI-1772203">
        <id>O14746</id>
        <label>TERT</label>
    </interactant>
    <organismsDiffer>false</organismsDiffer>
    <experiments>6</experiments>
</comment>
<comment type="interaction">
    <interactant intactId="EBI-721782">
        <id>Q96BK5</id>
    </interactant>
    <interactant intactId="EBI-740492">
        <id>Q9UKI8</id>
        <label>TLK1</label>
    </interactant>
    <organismsDiffer>false</organismsDiffer>
    <experiments>3</experiments>
</comment>
<comment type="interaction">
    <interactant intactId="EBI-721782">
        <id>Q96BK5</id>
    </interactant>
    <interactant intactId="EBI-12076664">
        <id>O14787-2</id>
        <label>TNPO2</label>
    </interactant>
    <organismsDiffer>false</organismsDiffer>
    <experiments>3</experiments>
</comment>
<comment type="interaction">
    <interactant intactId="EBI-721782">
        <id>Q96BK5</id>
    </interactant>
    <interactant intactId="EBI-607755">
        <id>Q9BZL1</id>
        <label>UBL5</label>
    </interactant>
    <organismsDiffer>false</organismsDiffer>
    <experiments>3</experiments>
</comment>
<comment type="subcellular location">
    <subcellularLocation>
        <location evidence="14">Nucleus</location>
    </subcellularLocation>
    <subcellularLocation>
        <location>Nucleus</location>
        <location>Nucleolus</location>
    </subcellularLocation>
    <subcellularLocation>
        <location>Chromosome</location>
        <location>Telomere</location>
    </subcellularLocation>
    <subcellularLocation>
        <location>Chromosome</location>
        <location>Centromere</location>
        <location>Kinetochore</location>
    </subcellularLocation>
    <text>Localizes in nucleoli, at telomere speckles and to the outer plate of kinetochores. Localization to the kinetochore is mediated by its central region and depends on NDC80 and CENPE.</text>
</comment>
<comment type="alternative products">
    <event type="alternative splicing"/>
    <isoform>
        <id>Q96BK5-1</id>
        <name>1</name>
        <sequence type="displayed"/>
    </isoform>
    <isoform>
        <id>Q96BK5-2</id>
        <name>2</name>
        <name>PINY1</name>
        <sequence type="described" ref="VSP_003945 VSP_003946"/>
    </isoform>
</comment>
<comment type="tissue specificity">
    <text>Ubiquitous; expressed at low levels. Not detectable in a number of hepatocarcinoma cell lines.</text>
</comment>
<comment type="domain">
    <text evidence="9">The TID (telomerase inhibiting domain) domain is sufficient to bind TERT and inhibit its activity.</text>
</comment>
<comment type="domain">
    <text evidence="9">The TBM domain mediates interaction with TERF1.</text>
</comment>
<comment type="PTM">
    <text evidence="14">Cleaved by enterovirus protease 3C to promote apoptosis.</text>
</comment>
<comment type="similarity">
    <text evidence="17">Belongs to the PINX1 family.</text>
</comment>
<sequence>MSMLAERRRKQKWAVDPQNTAWSNDDSKFGQRMLEKMGWSKGKGLGAQEQGATDHIKVQVKNNHLGLGATINNEDNWIAHQDDFNQLLAELNTCHGQETTDSSDKKEKKSFSLEEKSKISKNRVHYMKFTKGKDLSSRSKTDLDCIFGKRQSKKTPEGDASPSTPEENETTTTSAFTIQEYFAKRMAALKNKPQVPVPGSDISETQVERKRGKKRNKEATGKDVESYLQPKAKRHTEGKPERAEAQERVAKKKSAPAEEQLRGPCWDQSSKASAQDAGDHVQPPEGRDFTLKPKKRRGKKKLQKPVEIAEDATLEETLVKKKKKKDSK</sequence>
<proteinExistence type="evidence at protein level"/>
<dbReference type="EMBL" id="AF205718">
    <property type="protein sequence ID" value="AAG18009.1"/>
    <property type="molecule type" value="mRNA"/>
</dbReference>
<dbReference type="EMBL" id="AY029161">
    <property type="protein sequence ID" value="AAK31790.1"/>
    <property type="molecule type" value="mRNA"/>
</dbReference>
<dbReference type="EMBL" id="AJ344104">
    <property type="protein sequence ID" value="CAC51436.1"/>
    <property type="molecule type" value="mRNA"/>
</dbReference>
<dbReference type="EMBL" id="AF418553">
    <property type="protein sequence ID" value="AAN31333.1"/>
    <property type="molecule type" value="mRNA"/>
</dbReference>
<dbReference type="EMBL" id="AY238941">
    <property type="protein sequence ID" value="AAP37006.1"/>
    <property type="molecule type" value="mRNA"/>
</dbReference>
<dbReference type="EMBL" id="AY523566">
    <property type="protein sequence ID" value="AAS19507.1"/>
    <property type="molecule type" value="mRNA"/>
</dbReference>
<dbReference type="EMBL" id="AK000572">
    <property type="protein sequence ID" value="BAA91263.1"/>
    <property type="molecule type" value="mRNA"/>
</dbReference>
<dbReference type="EMBL" id="AK313715">
    <property type="protein sequence ID" value="BAG36458.1"/>
    <property type="molecule type" value="mRNA"/>
</dbReference>
<dbReference type="EMBL" id="CH471157">
    <property type="protein sequence ID" value="EAW65596.1"/>
    <property type="molecule type" value="Genomic_DNA"/>
</dbReference>
<dbReference type="EMBL" id="BC015479">
    <property type="protein sequence ID" value="AAH15479.1"/>
    <property type="molecule type" value="mRNA"/>
</dbReference>
<dbReference type="EMBL" id="BC093762">
    <property type="protein sequence ID" value="AAH93762.1"/>
    <property type="molecule type" value="mRNA"/>
</dbReference>
<dbReference type="CCDS" id="CCDS47801.1">
    <molecule id="Q96BK5-1"/>
</dbReference>
<dbReference type="CCDS" id="CCDS64825.1">
    <molecule id="Q96BK5-2"/>
</dbReference>
<dbReference type="RefSeq" id="NP_001271285.1">
    <molecule id="Q96BK5-2"/>
    <property type="nucleotide sequence ID" value="NM_001284356.2"/>
</dbReference>
<dbReference type="RefSeq" id="NP_060354.4">
    <molecule id="Q96BK5-1"/>
    <property type="nucleotide sequence ID" value="NM_017884.5"/>
</dbReference>
<dbReference type="BioGRID" id="120319">
    <property type="interactions" value="114"/>
</dbReference>
<dbReference type="ELM" id="Q96BK5"/>
<dbReference type="FunCoup" id="Q96BK5">
    <property type="interactions" value="2378"/>
</dbReference>
<dbReference type="IntAct" id="Q96BK5">
    <property type="interactions" value="71"/>
</dbReference>
<dbReference type="MINT" id="Q96BK5"/>
<dbReference type="STRING" id="9606.ENSP00000318966"/>
<dbReference type="GlyGen" id="Q96BK5">
    <property type="glycosylation" value="1 site, 1 O-linked glycan (1 site)"/>
</dbReference>
<dbReference type="iPTMnet" id="Q96BK5"/>
<dbReference type="PhosphoSitePlus" id="Q96BK5"/>
<dbReference type="BioMuta" id="PINX1"/>
<dbReference type="DMDM" id="21542178"/>
<dbReference type="jPOST" id="Q96BK5"/>
<dbReference type="MassIVE" id="Q96BK5"/>
<dbReference type="PaxDb" id="9606-ENSP00000318966"/>
<dbReference type="PeptideAtlas" id="Q96BK5"/>
<dbReference type="ProteomicsDB" id="76086">
    <molecule id="Q96BK5-1"/>
</dbReference>
<dbReference type="ProteomicsDB" id="76087">
    <molecule id="Q96BK5-2"/>
</dbReference>
<dbReference type="Pumba" id="Q96BK5"/>
<dbReference type="Antibodypedia" id="54507">
    <property type="antibodies" value="238 antibodies from 30 providers"/>
</dbReference>
<dbReference type="DNASU" id="54984"/>
<dbReference type="Ensembl" id="ENST00000314787.8">
    <molecule id="Q96BK5-1"/>
    <property type="protein sequence ID" value="ENSP00000318966.3"/>
    <property type="gene ID" value="ENSG00000254093.9"/>
</dbReference>
<dbReference type="Ensembl" id="ENST00000519088.5">
    <molecule id="Q96BK5-2"/>
    <property type="protein sequence ID" value="ENSP00000428853.1"/>
    <property type="gene ID" value="ENSG00000254093.9"/>
</dbReference>
<dbReference type="Ensembl" id="ENST00000647329.2">
    <molecule id="Q96BK5-1"/>
    <property type="protein sequence ID" value="ENSP00000495173.2"/>
    <property type="gene ID" value="ENSG00000284764.2"/>
</dbReference>
<dbReference type="Ensembl" id="ENST00000710827.1">
    <molecule id="Q96BK5-2"/>
    <property type="protein sequence ID" value="ENSP00000518505.1"/>
    <property type="gene ID" value="ENSG00000284764.2"/>
</dbReference>
<dbReference type="GeneID" id="54984"/>
<dbReference type="KEGG" id="hsa:54984"/>
<dbReference type="MANE-Select" id="ENST00000314787.8">
    <property type="protein sequence ID" value="ENSP00000318966.3"/>
    <property type="RefSeq nucleotide sequence ID" value="NM_017884.6"/>
    <property type="RefSeq protein sequence ID" value="NP_060354.4"/>
</dbReference>
<dbReference type="UCSC" id="uc003wth.4">
    <molecule id="Q96BK5-1"/>
    <property type="organism name" value="human"/>
</dbReference>
<dbReference type="AGR" id="HGNC:30046"/>
<dbReference type="CTD" id="54984"/>
<dbReference type="DisGeNET" id="54984"/>
<dbReference type="GeneCards" id="PINX1"/>
<dbReference type="HGNC" id="HGNC:30046">
    <property type="gene designation" value="PINX1"/>
</dbReference>
<dbReference type="HPA" id="ENSG00000254093">
    <property type="expression patterns" value="Low tissue specificity"/>
</dbReference>
<dbReference type="MIM" id="606505">
    <property type="type" value="gene"/>
</dbReference>
<dbReference type="neXtProt" id="NX_Q96BK5"/>
<dbReference type="OpenTargets" id="ENSG00000254093"/>
<dbReference type="PharmGKB" id="PA165585852"/>
<dbReference type="VEuPathDB" id="HostDB:ENSG00000254093"/>
<dbReference type="eggNOG" id="KOG2809">
    <property type="taxonomic scope" value="Eukaryota"/>
</dbReference>
<dbReference type="GeneTree" id="ENSGT00450000040279"/>
<dbReference type="HOGENOM" id="CLU_047471_0_0_1"/>
<dbReference type="InParanoid" id="Q96BK5"/>
<dbReference type="OMA" id="PCWDQSS"/>
<dbReference type="OrthoDB" id="29523at2759"/>
<dbReference type="PAN-GO" id="Q96BK5">
    <property type="GO annotations" value="3 GO annotations based on evolutionary models"/>
</dbReference>
<dbReference type="PhylomeDB" id="Q96BK5"/>
<dbReference type="TreeFam" id="TF321918"/>
<dbReference type="PathwayCommons" id="Q96BK5"/>
<dbReference type="SignaLink" id="Q96BK5"/>
<dbReference type="SIGNOR" id="Q96BK5"/>
<dbReference type="BioGRID-ORCS" id="54984">
    <property type="hits" value="76 hits in 1091 CRISPR screens"/>
</dbReference>
<dbReference type="CD-CODE" id="91857CE7">
    <property type="entry name" value="Nucleolus"/>
</dbReference>
<dbReference type="ChiTaRS" id="PINX1">
    <property type="organism name" value="human"/>
</dbReference>
<dbReference type="GeneWiki" id="PINX1"/>
<dbReference type="GenomeRNAi" id="54984"/>
<dbReference type="Pharos" id="Q96BK5">
    <property type="development level" value="Tbio"/>
</dbReference>
<dbReference type="PRO" id="PR:Q96BK5"/>
<dbReference type="Proteomes" id="UP000005640">
    <property type="component" value="Chromosome 8"/>
</dbReference>
<dbReference type="RNAct" id="Q96BK5">
    <property type="molecule type" value="protein"/>
</dbReference>
<dbReference type="Bgee" id="ENSG00000254093">
    <property type="expression patterns" value="Expressed in oocyte and 182 other cell types or tissues"/>
</dbReference>
<dbReference type="ExpressionAtlas" id="Q96BK5">
    <property type="expression patterns" value="baseline and differential"/>
</dbReference>
<dbReference type="GO" id="GO:0000781">
    <property type="term" value="C:chromosome, telomeric region"/>
    <property type="evidence" value="ECO:0000314"/>
    <property type="project" value="BHF-UCL"/>
</dbReference>
<dbReference type="GO" id="GO:0000776">
    <property type="term" value="C:kinetochore"/>
    <property type="evidence" value="ECO:0000314"/>
    <property type="project" value="UniProtKB"/>
</dbReference>
<dbReference type="GO" id="GO:0005739">
    <property type="term" value="C:mitochondrion"/>
    <property type="evidence" value="ECO:0000314"/>
    <property type="project" value="HPA"/>
</dbReference>
<dbReference type="GO" id="GO:0000228">
    <property type="term" value="C:nuclear chromosome"/>
    <property type="evidence" value="ECO:0000314"/>
    <property type="project" value="UniProtKB"/>
</dbReference>
<dbReference type="GO" id="GO:0005730">
    <property type="term" value="C:nucleolus"/>
    <property type="evidence" value="ECO:0000314"/>
    <property type="project" value="HPA"/>
</dbReference>
<dbReference type="GO" id="GO:0005654">
    <property type="term" value="C:nucleoplasm"/>
    <property type="evidence" value="ECO:0000314"/>
    <property type="project" value="HPA"/>
</dbReference>
<dbReference type="GO" id="GO:0005819">
    <property type="term" value="C:spindle"/>
    <property type="evidence" value="ECO:0000314"/>
    <property type="project" value="UniProtKB"/>
</dbReference>
<dbReference type="GO" id="GO:0044877">
    <property type="term" value="F:protein-containing complex binding"/>
    <property type="evidence" value="ECO:0000353"/>
    <property type="project" value="BHF-UCL"/>
</dbReference>
<dbReference type="GO" id="GO:0010521">
    <property type="term" value="F:telomerase inhibitor activity"/>
    <property type="evidence" value="ECO:0000314"/>
    <property type="project" value="BHF-UCL"/>
</dbReference>
<dbReference type="GO" id="GO:0070034">
    <property type="term" value="F:telomerase RNA binding"/>
    <property type="evidence" value="ECO:0000314"/>
    <property type="project" value="UniProtKB"/>
</dbReference>
<dbReference type="GO" id="GO:0007080">
    <property type="term" value="P:mitotic metaphase chromosome alignment"/>
    <property type="evidence" value="ECO:0000315"/>
    <property type="project" value="UniProtKB"/>
</dbReference>
<dbReference type="GO" id="GO:0008285">
    <property type="term" value="P:negative regulation of cell population proliferation"/>
    <property type="evidence" value="ECO:0000303"/>
    <property type="project" value="UniProtKB"/>
</dbReference>
<dbReference type="GO" id="GO:0010972">
    <property type="term" value="P:negative regulation of G2/M transition of mitotic cell cycle"/>
    <property type="evidence" value="ECO:0000314"/>
    <property type="project" value="BHF-UCL"/>
</dbReference>
<dbReference type="GO" id="GO:0031397">
    <property type="term" value="P:negative regulation of protein ubiquitination"/>
    <property type="evidence" value="ECO:0000315"/>
    <property type="project" value="BHF-UCL"/>
</dbReference>
<dbReference type="GO" id="GO:0032211">
    <property type="term" value="P:negative regulation of telomere maintenance via telomerase"/>
    <property type="evidence" value="ECO:0000314"/>
    <property type="project" value="BHF-UCL"/>
</dbReference>
<dbReference type="GO" id="GO:1904357">
    <property type="term" value="P:negative regulation of telomere maintenance via telomere lengthening"/>
    <property type="evidence" value="ECO:0000303"/>
    <property type="project" value="BHF-UCL"/>
</dbReference>
<dbReference type="GO" id="GO:1904751">
    <property type="term" value="P:positive regulation of protein localization to nucleolus"/>
    <property type="evidence" value="ECO:0000314"/>
    <property type="project" value="BHF-UCL"/>
</dbReference>
<dbReference type="GO" id="GO:1904744">
    <property type="term" value="P:positive regulation of telomeric DNA binding"/>
    <property type="evidence" value="ECO:0000314"/>
    <property type="project" value="BHF-UCL"/>
</dbReference>
<dbReference type="GO" id="GO:0070198">
    <property type="term" value="P:protein localization to chromosome, telomeric region"/>
    <property type="evidence" value="ECO:0000315"/>
    <property type="project" value="BHF-UCL"/>
</dbReference>
<dbReference type="GO" id="GO:1902570">
    <property type="term" value="P:protein localization to nucleolus"/>
    <property type="evidence" value="ECO:0000314"/>
    <property type="project" value="BHF-UCL"/>
</dbReference>
<dbReference type="GO" id="GO:0031647">
    <property type="term" value="P:regulation of protein stability"/>
    <property type="evidence" value="ECO:0000315"/>
    <property type="project" value="BHF-UCL"/>
</dbReference>
<dbReference type="GO" id="GO:0007004">
    <property type="term" value="P:telomere maintenance via telomerase"/>
    <property type="evidence" value="ECO:0000314"/>
    <property type="project" value="MGI"/>
</dbReference>
<dbReference type="InterPro" id="IPR000467">
    <property type="entry name" value="G_patch_dom"/>
</dbReference>
<dbReference type="InterPro" id="IPR050656">
    <property type="entry name" value="PINX1"/>
</dbReference>
<dbReference type="PANTHER" id="PTHR23149">
    <property type="entry name" value="G PATCH DOMAIN CONTAINING PROTEIN"/>
    <property type="match status" value="1"/>
</dbReference>
<dbReference type="PANTHER" id="PTHR23149:SF27">
    <property type="entry name" value="PIN2_TERF1-INTERACTING TELOMERASE INHIBITOR 1"/>
    <property type="match status" value="1"/>
</dbReference>
<dbReference type="Pfam" id="PF01585">
    <property type="entry name" value="G-patch"/>
    <property type="match status" value="1"/>
</dbReference>
<dbReference type="SMART" id="SM00443">
    <property type="entry name" value="G_patch"/>
    <property type="match status" value="1"/>
</dbReference>
<dbReference type="PROSITE" id="PS50174">
    <property type="entry name" value="G_PATCH"/>
    <property type="match status" value="1"/>
</dbReference>
<gene>
    <name type="primary">PINX1</name>
    <name type="synonym">LPTL</name>
    <name type="synonym">LPTS</name>
</gene>
<name>PINX1_HUMAN</name>
<keyword id="KW-0025">Alternative splicing</keyword>
<keyword id="KW-0137">Centromere</keyword>
<keyword id="KW-0158">Chromosome</keyword>
<keyword id="KW-0995">Kinetochore</keyword>
<keyword id="KW-0539">Nucleus</keyword>
<keyword id="KW-0597">Phosphoprotein</keyword>
<keyword id="KW-1267">Proteomics identification</keyword>
<keyword id="KW-1185">Reference proteome</keyword>
<keyword id="KW-0779">Telomere</keyword>
<keyword id="KW-0043">Tumor suppressor</keyword>
<reference key="1">
    <citation type="journal article" date="2000" name="Hepatology">
        <title>Identification of the gene for a novel liver-related putative tumor suppressor at a high-frequency loss of heterozygosity region of chromosome 8p23 in human hepatocellular carcinoma.</title>
        <authorList>
            <person name="Liao C."/>
            <person name="Zhao M."/>
            <person name="Song H."/>
            <person name="Uchida K."/>
            <person name="Yokoyama K.K."/>
            <person name="Li T.P."/>
        </authorList>
    </citation>
    <scope>NUCLEOTIDE SEQUENCE [MRNA] (ISOFORM 2)</scope>
    <source>
        <tissue>Liver</tissue>
    </source>
</reference>
<reference key="2">
    <citation type="journal article" date="2001" name="Cell">
        <title>The Pin2/TRF1-interacting protein PinX1 is a potent telomerase inhibitor.</title>
        <authorList>
            <person name="Zhou X.Z."/>
            <person name="Lu K.P."/>
        </authorList>
    </citation>
    <scope>NUCLEOTIDE SEQUENCE [MRNA] (ISOFORM 1)</scope>
    <scope>VARIANT CYS-254</scope>
    <source>
        <tissue>Cervix carcinoma</tissue>
    </source>
</reference>
<reference key="3">
    <citation type="thesis" date="2001" institute="University of Goettingen" country="Germany">
        <authorList>
            <person name="Schmidt T."/>
        </authorList>
    </citation>
    <scope>NUCLEOTIDE SEQUENCE [MRNA] (ISOFORM 1)</scope>
</reference>
<reference key="4">
    <citation type="submission" date="2001-09" db="EMBL/GenBank/DDBJ databases">
        <title>Identification of the gene LPTL, encoding for a new isoform of human putative tumor suppressor LPTS.</title>
        <authorList>
            <person name="Liao C."/>
            <person name="Zhao M."/>
            <person name="Li T.P."/>
        </authorList>
    </citation>
    <scope>NUCLEOTIDE SEQUENCE [MRNA] (ISOFORM 1)</scope>
</reference>
<reference key="5">
    <citation type="submission" date="2003-02" db="EMBL/GenBank/DDBJ databases">
        <authorList>
            <person name="Qiang F."/>
        </authorList>
    </citation>
    <scope>NUCLEOTIDE SEQUENCE [MRNA] (ISOFORM 2)</scope>
</reference>
<reference key="6">
    <citation type="submission" date="2004-01" db="EMBL/GenBank/DDBJ databases">
        <authorList>
            <person name="Fu Q."/>
            <person name="Cao Y."/>
            <person name="Zuo A."/>
            <person name="Liang D."/>
            <person name="Zhang Y."/>
            <person name="Wang B."/>
            <person name="Huang H."/>
            <person name="Wu Y."/>
            <person name="Zhu L."/>
            <person name="Wang P."/>
            <person name="Guo S."/>
            <person name="Guo G."/>
            <person name="Zhang J."/>
            <person name="Wang X."/>
        </authorList>
    </citation>
    <scope>NUCLEOTIDE SEQUENCE [MRNA] (ISOFORM 1)</scope>
</reference>
<reference key="7">
    <citation type="journal article" date="2004" name="Nat. Genet.">
        <title>Complete sequencing and characterization of 21,243 full-length human cDNAs.</title>
        <authorList>
            <person name="Ota T."/>
            <person name="Suzuki Y."/>
            <person name="Nishikawa T."/>
            <person name="Otsuki T."/>
            <person name="Sugiyama T."/>
            <person name="Irie R."/>
            <person name="Wakamatsu A."/>
            <person name="Hayashi K."/>
            <person name="Sato H."/>
            <person name="Nagai K."/>
            <person name="Kimura K."/>
            <person name="Makita H."/>
            <person name="Sekine M."/>
            <person name="Obayashi M."/>
            <person name="Nishi T."/>
            <person name="Shibahara T."/>
            <person name="Tanaka T."/>
            <person name="Ishii S."/>
            <person name="Yamamoto J."/>
            <person name="Saito K."/>
            <person name="Kawai Y."/>
            <person name="Isono Y."/>
            <person name="Nakamura Y."/>
            <person name="Nagahari K."/>
            <person name="Murakami K."/>
            <person name="Yasuda T."/>
            <person name="Iwayanagi T."/>
            <person name="Wagatsuma M."/>
            <person name="Shiratori A."/>
            <person name="Sudo H."/>
            <person name="Hosoiri T."/>
            <person name="Kaku Y."/>
            <person name="Kodaira H."/>
            <person name="Kondo H."/>
            <person name="Sugawara M."/>
            <person name="Takahashi M."/>
            <person name="Kanda K."/>
            <person name="Yokoi T."/>
            <person name="Furuya T."/>
            <person name="Kikkawa E."/>
            <person name="Omura Y."/>
            <person name="Abe K."/>
            <person name="Kamihara K."/>
            <person name="Katsuta N."/>
            <person name="Sato K."/>
            <person name="Tanikawa M."/>
            <person name="Yamazaki M."/>
            <person name="Ninomiya K."/>
            <person name="Ishibashi T."/>
            <person name="Yamashita H."/>
            <person name="Murakawa K."/>
            <person name="Fujimori K."/>
            <person name="Tanai H."/>
            <person name="Kimata M."/>
            <person name="Watanabe M."/>
            <person name="Hiraoka S."/>
            <person name="Chiba Y."/>
            <person name="Ishida S."/>
            <person name="Ono Y."/>
            <person name="Takiguchi S."/>
            <person name="Watanabe S."/>
            <person name="Yosida M."/>
            <person name="Hotuta T."/>
            <person name="Kusano J."/>
            <person name="Kanehori K."/>
            <person name="Takahashi-Fujii A."/>
            <person name="Hara H."/>
            <person name="Tanase T.-O."/>
            <person name="Nomura Y."/>
            <person name="Togiya S."/>
            <person name="Komai F."/>
            <person name="Hara R."/>
            <person name="Takeuchi K."/>
            <person name="Arita M."/>
            <person name="Imose N."/>
            <person name="Musashino K."/>
            <person name="Yuuki H."/>
            <person name="Oshima A."/>
            <person name="Sasaki N."/>
            <person name="Aotsuka S."/>
            <person name="Yoshikawa Y."/>
            <person name="Matsunawa H."/>
            <person name="Ichihara T."/>
            <person name="Shiohata N."/>
            <person name="Sano S."/>
            <person name="Moriya S."/>
            <person name="Momiyama H."/>
            <person name="Satoh N."/>
            <person name="Takami S."/>
            <person name="Terashima Y."/>
            <person name="Suzuki O."/>
            <person name="Nakagawa S."/>
            <person name="Senoh A."/>
            <person name="Mizoguchi H."/>
            <person name="Goto Y."/>
            <person name="Shimizu F."/>
            <person name="Wakebe H."/>
            <person name="Hishigaki H."/>
            <person name="Watanabe T."/>
            <person name="Sugiyama A."/>
            <person name="Takemoto M."/>
            <person name="Kawakami B."/>
            <person name="Yamazaki M."/>
            <person name="Watanabe K."/>
            <person name="Kumagai A."/>
            <person name="Itakura S."/>
            <person name="Fukuzumi Y."/>
            <person name="Fujimori Y."/>
            <person name="Komiyama M."/>
            <person name="Tashiro H."/>
            <person name="Tanigami A."/>
            <person name="Fujiwara T."/>
            <person name="Ono T."/>
            <person name="Yamada K."/>
            <person name="Fujii Y."/>
            <person name="Ozaki K."/>
            <person name="Hirao M."/>
            <person name="Ohmori Y."/>
            <person name="Kawabata A."/>
            <person name="Hikiji T."/>
            <person name="Kobatake N."/>
            <person name="Inagaki H."/>
            <person name="Ikema Y."/>
            <person name="Okamoto S."/>
            <person name="Okitani R."/>
            <person name="Kawakami T."/>
            <person name="Noguchi S."/>
            <person name="Itoh T."/>
            <person name="Shigeta K."/>
            <person name="Senba T."/>
            <person name="Matsumura K."/>
            <person name="Nakajima Y."/>
            <person name="Mizuno T."/>
            <person name="Morinaga M."/>
            <person name="Sasaki M."/>
            <person name="Togashi T."/>
            <person name="Oyama M."/>
            <person name="Hata H."/>
            <person name="Watanabe M."/>
            <person name="Komatsu T."/>
            <person name="Mizushima-Sugano J."/>
            <person name="Satoh T."/>
            <person name="Shirai Y."/>
            <person name="Takahashi Y."/>
            <person name="Nakagawa K."/>
            <person name="Okumura K."/>
            <person name="Nagase T."/>
            <person name="Nomura N."/>
            <person name="Kikuchi H."/>
            <person name="Masuho Y."/>
            <person name="Yamashita R."/>
            <person name="Nakai K."/>
            <person name="Yada T."/>
            <person name="Nakamura Y."/>
            <person name="Ohara O."/>
            <person name="Isogai T."/>
            <person name="Sugano S."/>
        </authorList>
    </citation>
    <scope>NUCLEOTIDE SEQUENCE [LARGE SCALE MRNA] (ISOFORM 1)</scope>
    <scope>VARIANT ILE-215</scope>
</reference>
<reference key="8">
    <citation type="submission" date="2005-07" db="EMBL/GenBank/DDBJ databases">
        <authorList>
            <person name="Mural R.J."/>
            <person name="Istrail S."/>
            <person name="Sutton G.G."/>
            <person name="Florea L."/>
            <person name="Halpern A.L."/>
            <person name="Mobarry C.M."/>
            <person name="Lippert R."/>
            <person name="Walenz B."/>
            <person name="Shatkay H."/>
            <person name="Dew I."/>
            <person name="Miller J.R."/>
            <person name="Flanigan M.J."/>
            <person name="Edwards N.J."/>
            <person name="Bolanos R."/>
            <person name="Fasulo D."/>
            <person name="Halldorsson B.V."/>
            <person name="Hannenhalli S."/>
            <person name="Turner R."/>
            <person name="Yooseph S."/>
            <person name="Lu F."/>
            <person name="Nusskern D.R."/>
            <person name="Shue B.C."/>
            <person name="Zheng X.H."/>
            <person name="Zhong F."/>
            <person name="Delcher A.L."/>
            <person name="Huson D.H."/>
            <person name="Kravitz S.A."/>
            <person name="Mouchard L."/>
            <person name="Reinert K."/>
            <person name="Remington K.A."/>
            <person name="Clark A.G."/>
            <person name="Waterman M.S."/>
            <person name="Eichler E.E."/>
            <person name="Adams M.D."/>
            <person name="Hunkapiller M.W."/>
            <person name="Myers E.W."/>
            <person name="Venter J.C."/>
        </authorList>
    </citation>
    <scope>NUCLEOTIDE SEQUENCE [LARGE SCALE GENOMIC DNA]</scope>
</reference>
<reference key="9">
    <citation type="journal article" date="2004" name="Genome Res.">
        <title>The status, quality, and expansion of the NIH full-length cDNA project: the Mammalian Gene Collection (MGC).</title>
        <authorList>
            <consortium name="The MGC Project Team"/>
        </authorList>
    </citation>
    <scope>NUCLEOTIDE SEQUENCE [LARGE SCALE MRNA] (ISOFORM 1)</scope>
    <source>
        <tissue>Uterus</tissue>
    </source>
</reference>
<reference key="10">
    <citation type="journal article" date="2004" name="Biochem. Biophys. Res. Commun.">
        <title>Human MCRS2, a cell-cycle-dependent protein, associates with LPTS/PinX1 and reduces the telomere length.</title>
        <authorList>
            <person name="Song H."/>
            <person name="Li Y."/>
            <person name="Chen G."/>
            <person name="Xing Z."/>
            <person name="Zhao J."/>
            <person name="Yokoyama K.K."/>
            <person name="Li T."/>
            <person name="Zhao M."/>
        </authorList>
    </citation>
    <scope>INTERACTION WITH MCRS1</scope>
</reference>
<reference key="11">
    <citation type="journal article" date="2004" name="J. Biol. Chem.">
        <title>Characterization of interactions between PinX1 and human telomerase subunits hTERT and hTR.</title>
        <authorList>
            <person name="Banik S.S.R."/>
            <person name="Counter C.M."/>
        </authorList>
    </citation>
    <scope>FUNCTION</scope>
    <scope>INTERACTION WITH TERT AND THE TELOMERASE RNA</scope>
</reference>
<reference key="12">
    <citation type="journal article" date="2007" name="Biochem. Biophys. Res. Commun.">
        <title>Characterization of a novel effect of hPinX1 on hTERT nucleolar localization.</title>
        <authorList>
            <person name="Lin J."/>
            <person name="Jin R."/>
            <person name="Zhang B."/>
            <person name="Yang P.X."/>
            <person name="Chen H."/>
            <person name="Bai Y.X."/>
            <person name="Xie Y."/>
            <person name="Huang C."/>
            <person name="Huang J."/>
        </authorList>
    </citation>
    <scope>FUNCTION</scope>
</reference>
<reference key="13">
    <citation type="journal article" date="2008" name="Proc. Natl. Acad. Sci. U.S.A.">
        <title>A quantitative atlas of mitotic phosphorylation.</title>
        <authorList>
            <person name="Dephoure N."/>
            <person name="Zhou C."/>
            <person name="Villen J."/>
            <person name="Beausoleil S.A."/>
            <person name="Bakalarski C.E."/>
            <person name="Elledge S.J."/>
            <person name="Gygi S.P."/>
        </authorList>
    </citation>
    <scope>IDENTIFICATION BY MASS SPECTROMETRY [LARGE SCALE ANALYSIS]</scope>
    <source>
        <tissue>Cervix carcinoma</tissue>
    </source>
</reference>
<reference key="14">
    <citation type="journal article" date="2008" name="Science">
        <title>A shared docking motif in TRF1 and TRF2 used for differential recruitment of telomeric proteins.</title>
        <authorList>
            <person name="Chen Y."/>
            <person name="Yang Y."/>
            <person name="van Overbeek M."/>
            <person name="Donigian J.R."/>
            <person name="Baciu P."/>
            <person name="de Lange T."/>
            <person name="Lei M."/>
        </authorList>
    </citation>
    <scope>INTERACTION WITH TERF1</scope>
    <scope>DOMAIN TBM</scope>
    <scope>MUTAGENESIS OF LEU-291 AND PRO-293</scope>
</reference>
<reference key="15">
    <citation type="journal article" date="2009" name="Biochem. Biophys. Res. Commun.">
        <title>PinX1 is recruited to the mitotic chromosome periphery by nucleolin and facilitates chromosome congression.</title>
        <authorList>
            <person name="Li N."/>
            <person name="Yuan K."/>
            <person name="Yan F."/>
            <person name="Huo Y."/>
            <person name="Zhu T."/>
            <person name="Liu X."/>
            <person name="Guo Z."/>
            <person name="Yao X."/>
        </authorList>
    </citation>
    <scope>FUNCTION</scope>
    <scope>SUBCELLULAR LOCATION</scope>
    <scope>INTERACTION WITH NCL/NUCLEOLIN</scope>
</reference>
<reference key="16">
    <citation type="journal article" date="2009" name="Cancer Res.">
        <title>Silencing PinX1 compromises telomere length maintenance as well as tumorigenicity in telomerase-positive human cancer cells.</title>
        <authorList>
            <person name="Zhang B."/>
            <person name="Bai Y.X."/>
            <person name="Ma H.H."/>
            <person name="Feng F."/>
            <person name="Jin R."/>
            <person name="Wang Z.L."/>
            <person name="Lin J."/>
            <person name="Sun S.P."/>
            <person name="Yang P."/>
            <person name="Wang X.X."/>
            <person name="Huang P.T."/>
            <person name="Huang C.F."/>
            <person name="Peng Y."/>
            <person name="Chen Y.C."/>
            <person name="Kung H.F."/>
            <person name="Huang J.J."/>
        </authorList>
    </citation>
    <scope>FUNCTION</scope>
</reference>
<reference key="17">
    <citation type="journal article" date="2009" name="J. Biol. Chem.">
        <title>PinX1 is a novel microtubule-binding protein essential for accurate chromosome segregation.</title>
        <authorList>
            <person name="Yuan K."/>
            <person name="Li N."/>
            <person name="Jiang K."/>
            <person name="Zhu T."/>
            <person name="Huo Y."/>
            <person name="Wang C."/>
            <person name="Lu J."/>
            <person name="Shaw A."/>
            <person name="Thomas K."/>
            <person name="Zhang J."/>
            <person name="Mann D."/>
            <person name="Liao J."/>
            <person name="Jin C."/>
            <person name="Yao X."/>
        </authorList>
    </citation>
    <scope>SUBCELLULAR LOCATION</scope>
    <scope>FUNCTION</scope>
</reference>
<reference key="18">
    <citation type="journal article" date="2009" name="J. Mol. Biol.">
        <title>Human PinX1 mediates TRF1 accumulation in nucleolus and enhances TRF1 binding to telomeres.</title>
        <authorList>
            <person name="Yoo J.E."/>
            <person name="Oh B.-K."/>
            <person name="Park Y.N."/>
        </authorList>
    </citation>
    <scope>SUBCELLULAR LOCATION</scope>
    <scope>FUNCTION</scope>
</reference>
<reference key="19">
    <citation type="journal article" date="2009" name="Sci. Signal.">
        <title>Quantitative phosphoproteomic analysis of T cell receptor signaling reveals system-wide modulation of protein-protein interactions.</title>
        <authorList>
            <person name="Mayya V."/>
            <person name="Lundgren D.H."/>
            <person name="Hwang S.-I."/>
            <person name="Rezaul K."/>
            <person name="Wu L."/>
            <person name="Eng J.K."/>
            <person name="Rodionov V."/>
            <person name="Han D.K."/>
        </authorList>
    </citation>
    <scope>IDENTIFICATION BY MASS SPECTROMETRY [LARGE SCALE ANALYSIS]</scope>
    <source>
        <tissue>Leukemic T-cell</tissue>
    </source>
</reference>
<reference key="20">
    <citation type="journal article" date="2011" name="Sci. Signal.">
        <title>System-wide temporal characterization of the proteome and phosphoproteome of human embryonic stem cell differentiation.</title>
        <authorList>
            <person name="Rigbolt K.T."/>
            <person name="Prokhorova T.A."/>
            <person name="Akimov V."/>
            <person name="Henningsen J."/>
            <person name="Johansen P.T."/>
            <person name="Kratchmarova I."/>
            <person name="Kassem M."/>
            <person name="Mann M."/>
            <person name="Olsen J.V."/>
            <person name="Blagoev B."/>
        </authorList>
    </citation>
    <scope>IDENTIFICATION BY MASS SPECTROMETRY [LARGE SCALE ANALYSIS]</scope>
</reference>
<reference key="21">
    <citation type="journal article" date="2014" name="J. Proteomics">
        <title>An enzyme assisted RP-RPLC approach for in-depth analysis of human liver phosphoproteome.</title>
        <authorList>
            <person name="Bian Y."/>
            <person name="Song C."/>
            <person name="Cheng K."/>
            <person name="Dong M."/>
            <person name="Wang F."/>
            <person name="Huang J."/>
            <person name="Sun D."/>
            <person name="Wang L."/>
            <person name="Ye M."/>
            <person name="Zou H."/>
        </authorList>
    </citation>
    <scope>IDENTIFICATION BY MASS SPECTROMETRY [LARGE SCALE ANALYSIS]</scope>
    <source>
        <tissue>Liver</tissue>
    </source>
</reference>
<reference key="22">
    <citation type="journal article" date="2017" name="J. Virol.">
        <title>Enterovirus 71 3C Promotes Apoptosis through Cleavage of PinX1, a Telomere Binding Protein.</title>
        <authorList>
            <person name="Li J."/>
            <person name="Yao Y."/>
            <person name="Chen Y."/>
            <person name="Xu X."/>
            <person name="Lin Y."/>
            <person name="Yang Z."/>
            <person name="Qiao W."/>
            <person name="Tan J."/>
        </authorList>
    </citation>
    <scope>CLEAVAGE BY ENTEROVIRUS 71 PROTEASE 3C (MICROBIAL INFECTION)</scope>
    <scope>SUBCELLULAR LOCATION</scope>
    <scope>CLEAVAGE SITE</scope>
    <scope>MUTAGENESIS OF GLN-50</scope>
</reference>